<feature type="chain" id="PRO_0000291944" description="Transmembrane protein 41B">
    <location>
        <begin position="1"/>
        <end position="278"/>
    </location>
</feature>
<feature type="transmembrane region" description="Helical" evidence="3">
    <location>
        <begin position="39"/>
        <end position="59"/>
    </location>
</feature>
<feature type="transmembrane region" description="Helical" evidence="3">
    <location>
        <begin position="96"/>
        <end position="116"/>
    </location>
</feature>
<feature type="transmembrane region" description="Helical" evidence="3">
    <location>
        <begin position="132"/>
        <end position="154"/>
    </location>
</feature>
<feature type="transmembrane region" description="Helical" evidence="3">
    <location>
        <begin position="184"/>
        <end position="204"/>
    </location>
</feature>
<feature type="transmembrane region" description="Helical" evidence="3">
    <location>
        <begin position="212"/>
        <end position="232"/>
    </location>
</feature>
<feature type="transmembrane region" description="Helical" evidence="3">
    <location>
        <begin position="249"/>
        <end position="269"/>
    </location>
</feature>
<feature type="region of interest" description="Disordered" evidence="4">
    <location>
        <begin position="1"/>
        <end position="31"/>
    </location>
</feature>
<feature type="region of interest" description="VTT domain; required for its function in autophagy" evidence="2">
    <location>
        <begin position="127"/>
        <end position="238"/>
    </location>
</feature>
<reference key="1">
    <citation type="submission" date="2007-03" db="EMBL/GenBank/DDBJ databases">
        <authorList>
            <consortium name="NIH - Xenopus Gene Collection (XGC) project"/>
        </authorList>
    </citation>
    <scope>NUCLEOTIDE SEQUENCE [LARGE SCALE MRNA]</scope>
    <source>
        <tissue>Tadpole</tissue>
    </source>
</reference>
<evidence type="ECO:0000250" key="1">
    <source>
        <dbReference type="UniProtKB" id="A1A5V7"/>
    </source>
</evidence>
<evidence type="ECO:0000250" key="2">
    <source>
        <dbReference type="UniProtKB" id="Q5BJD5"/>
    </source>
</evidence>
<evidence type="ECO:0000255" key="3"/>
<evidence type="ECO:0000256" key="4">
    <source>
        <dbReference type="SAM" id="MobiDB-lite"/>
    </source>
</evidence>
<evidence type="ECO:0000305" key="5"/>
<name>TM41B_XENTR</name>
<organism>
    <name type="scientific">Xenopus tropicalis</name>
    <name type="common">Western clawed frog</name>
    <name type="synonym">Silurana tropicalis</name>
    <dbReference type="NCBI Taxonomy" id="8364"/>
    <lineage>
        <taxon>Eukaryota</taxon>
        <taxon>Metazoa</taxon>
        <taxon>Chordata</taxon>
        <taxon>Craniata</taxon>
        <taxon>Vertebrata</taxon>
        <taxon>Euteleostomi</taxon>
        <taxon>Amphibia</taxon>
        <taxon>Batrachia</taxon>
        <taxon>Anura</taxon>
        <taxon>Pipoidea</taxon>
        <taxon>Pipidae</taxon>
        <taxon>Xenopodinae</taxon>
        <taxon>Xenopus</taxon>
        <taxon>Silurana</taxon>
    </lineage>
</organism>
<dbReference type="EMBL" id="BC135922">
    <property type="protein sequence ID" value="AAI35923.1"/>
    <property type="molecule type" value="mRNA"/>
</dbReference>
<dbReference type="FunCoup" id="A4II98">
    <property type="interactions" value="1108"/>
</dbReference>
<dbReference type="STRING" id="8364.ENSXETP00000020961"/>
<dbReference type="InParanoid" id="A4II98"/>
<dbReference type="Proteomes" id="UP000008143">
    <property type="component" value="Unplaced"/>
</dbReference>
<dbReference type="GO" id="GO:0005789">
    <property type="term" value="C:endoplasmic reticulum membrane"/>
    <property type="evidence" value="ECO:0000250"/>
    <property type="project" value="UniProtKB"/>
</dbReference>
<dbReference type="GO" id="GO:0044233">
    <property type="term" value="C:mitochondria-associated endoplasmic reticulum membrane contact site"/>
    <property type="evidence" value="ECO:0000250"/>
    <property type="project" value="UniProtKB"/>
</dbReference>
<dbReference type="GO" id="GO:0017128">
    <property type="term" value="F:phospholipid scramblase activity"/>
    <property type="evidence" value="ECO:0000250"/>
    <property type="project" value="UniProtKB"/>
</dbReference>
<dbReference type="GO" id="GO:0000045">
    <property type="term" value="P:autophagosome assembly"/>
    <property type="evidence" value="ECO:0000250"/>
    <property type="project" value="UniProtKB"/>
</dbReference>
<dbReference type="GO" id="GO:0007399">
    <property type="term" value="P:nervous system development"/>
    <property type="evidence" value="ECO:0007669"/>
    <property type="project" value="UniProtKB-KW"/>
</dbReference>
<dbReference type="InterPro" id="IPR045014">
    <property type="entry name" value="TM41A/B"/>
</dbReference>
<dbReference type="InterPro" id="IPR032816">
    <property type="entry name" value="VTT_dom"/>
</dbReference>
<dbReference type="PANTHER" id="PTHR43220">
    <property type="match status" value="1"/>
</dbReference>
<dbReference type="PANTHER" id="PTHR43220:SF18">
    <property type="entry name" value="TRANSMEMBRANE PROTEIN 41B"/>
    <property type="match status" value="1"/>
</dbReference>
<dbReference type="Pfam" id="PF09335">
    <property type="entry name" value="VTT_dom"/>
    <property type="match status" value="1"/>
</dbReference>
<sequence length="278" mass="31186">MQVHERSHTGGHTCQCNHGSEKKAPATGKVHSEGGSARMSLLILVSIFLCAASIMFLVYKHFPQLSEEEREKIKVPRDMDDAKALGKVLSKYKDTFYVEVLVAYFTTYIFLQTFAIPGSIFLSILSGFLYPFPLALFLVCLCSGLGASFSYLLSYLVGRPVVYKYLSDKAIKWSQQVERHRDHLINYIIFLRITPFLPNWFINITSPVINVPLKVFFLGTFIGVAPPSFVAIKAGTTLYQLTTAGEAVSWNSVIILMVLAVLSILPAIFQKKLKKKFE</sequence>
<proteinExistence type="evidence at transcript level"/>
<comment type="function">
    <text evidence="1 2">Phospholipid scramblase involved in lipid homeostasis and membrane dynamics processes. Has phospholipid scramblase activity toward cholesterol and phosphatidylserine, as well as phosphatidylethanolamine and phosphatidylcholine. Required for autophagosome formation: participates in early stages of autophagosome biogenesis at the endoplasmic reticulum (ER) membrane by reequilibrating the leaflets of the ER as lipids are extracted by atg2 (atg2a or atg2b) to mediate autophagosome assembly. In addition to autophagy, involved in other processes in which phospholipid scramblase activity is required (By similarity). Required for normal motor neuron development (By similarity).</text>
</comment>
<comment type="catalytic activity">
    <reaction evidence="2">
        <text>a 1,2-diacyl-sn-glycero-3-phospho-L-serine(in) = a 1,2-diacyl-sn-glycero-3-phospho-L-serine(out)</text>
        <dbReference type="Rhea" id="RHEA:38663"/>
        <dbReference type="ChEBI" id="CHEBI:57262"/>
    </reaction>
</comment>
<comment type="catalytic activity">
    <reaction evidence="2">
        <text>cholesterol(in) = cholesterol(out)</text>
        <dbReference type="Rhea" id="RHEA:39747"/>
        <dbReference type="ChEBI" id="CHEBI:16113"/>
    </reaction>
</comment>
<comment type="catalytic activity">
    <reaction evidence="2">
        <text>a 1,2-diacyl-sn-glycero-3-phosphocholine(in) = a 1,2-diacyl-sn-glycero-3-phosphocholine(out)</text>
        <dbReference type="Rhea" id="RHEA:38571"/>
        <dbReference type="ChEBI" id="CHEBI:57643"/>
    </reaction>
</comment>
<comment type="catalytic activity">
    <reaction evidence="2">
        <text>a 1,2-diacyl-sn-glycero-3-phosphoethanolamine(in) = a 1,2-diacyl-sn-glycero-3-phosphoethanolamine(out)</text>
        <dbReference type="Rhea" id="RHEA:38895"/>
        <dbReference type="ChEBI" id="CHEBI:64612"/>
    </reaction>
</comment>
<comment type="subcellular location">
    <subcellularLocation>
        <location evidence="2">Endoplasmic reticulum membrane</location>
        <topology evidence="3">Multi-pass membrane protein</topology>
    </subcellularLocation>
    <subcellularLocation>
        <location evidence="2">Endomembrane system</location>
    </subcellularLocation>
    <text evidence="2">Localized to specific membrane structures termed mitochondria-associated membranes (MAMs) which connect the endoplasmic reticulum (ER) and the mitochondria.</text>
</comment>
<comment type="domain">
    <text evidence="2">The VTT domain was previously called the SNARE-assoc domain. As there is no evidence that this domain associates with SNARE proteins, it was renamed as VMP1, TMEM41, and TVP38 (VTT) domain.</text>
</comment>
<comment type="similarity">
    <text evidence="5">Belongs to the TMEM41 family.</text>
</comment>
<accession>A4II98</accession>
<protein>
    <recommendedName>
        <fullName evidence="5">Transmembrane protein 41B</fullName>
    </recommendedName>
</protein>
<gene>
    <name evidence="2" type="primary">tmem41b</name>
</gene>
<keyword id="KW-0072">Autophagy</keyword>
<keyword id="KW-0256">Endoplasmic reticulum</keyword>
<keyword id="KW-0445">Lipid transport</keyword>
<keyword id="KW-0472">Membrane</keyword>
<keyword id="KW-0524">Neurogenesis</keyword>
<keyword id="KW-1185">Reference proteome</keyword>
<keyword id="KW-0812">Transmembrane</keyword>
<keyword id="KW-1133">Transmembrane helix</keyword>
<keyword id="KW-0813">Transport</keyword>